<organism>
    <name type="scientific">Brucella suis biovar 1 (strain 1330)</name>
    <dbReference type="NCBI Taxonomy" id="204722"/>
    <lineage>
        <taxon>Bacteria</taxon>
        <taxon>Pseudomonadati</taxon>
        <taxon>Pseudomonadota</taxon>
        <taxon>Alphaproteobacteria</taxon>
        <taxon>Hyphomicrobiales</taxon>
        <taxon>Brucellaceae</taxon>
        <taxon>Brucella/Ochrobactrum group</taxon>
        <taxon>Brucella</taxon>
    </lineage>
</organism>
<protein>
    <recommendedName>
        <fullName evidence="1">Imidazolonepropionase</fullName>
        <ecNumber evidence="1">3.5.2.7</ecNumber>
    </recommendedName>
    <alternativeName>
        <fullName evidence="1">Imidazolone-5-propionate hydrolase</fullName>
    </alternativeName>
</protein>
<proteinExistence type="inferred from homology"/>
<accession>Q8FVB5</accession>
<accession>G0KDT9</accession>
<sequence>MTKNSSTVFTHARIATLEEKAANLGLIEEAALVVKDARIVYAGPENKLPGEYASFEKIDCGNRLITPGLIDCHTHLVHAGNRAHEFELRLQGATYEEVARAGGGIVSSVRNLRAASEDDLVRETLPRLDALIAEGVTTVEVKSGYGLDRDSEIKSLKAARRLGEERDVAIRTTFLGAHALPPEMNGDKAAYIDRVINDMLPAIAEQGLADAVDGFCEGIAFLPDEIARVFDAAKAHDIPVKLHADQLSNLHGAALAASYGALSADHLEYTDGDGAAAMASAGTVAVLLPGAYYFIRETQKPPVEAFRAAGTKMALATDNNPGTSPLTSLLLTMNMGATLFRMTVEECIAGVTREAARALGILDQTGTLEIGKDADLAIWDIERPAELVYRIGFNPLWKRVFKGQI</sequence>
<dbReference type="EC" id="3.5.2.7" evidence="1"/>
<dbReference type="EMBL" id="AE014292">
    <property type="protein sequence ID" value="AAN34101.1"/>
    <property type="molecule type" value="Genomic_DNA"/>
</dbReference>
<dbReference type="EMBL" id="CP002998">
    <property type="protein sequence ID" value="AEM20377.1"/>
    <property type="molecule type" value="Genomic_DNA"/>
</dbReference>
<dbReference type="RefSeq" id="WP_004690361.1">
    <property type="nucleotide sequence ID" value="NZ_KN046805.1"/>
</dbReference>
<dbReference type="SMR" id="Q8FVB5"/>
<dbReference type="GeneID" id="45053926"/>
<dbReference type="KEGG" id="bms:BRA0929"/>
<dbReference type="KEGG" id="bsi:BS1330_II0921"/>
<dbReference type="PATRIC" id="fig|204722.22.peg.2518"/>
<dbReference type="HOGENOM" id="CLU_041647_0_0_5"/>
<dbReference type="PhylomeDB" id="Q8FVB5"/>
<dbReference type="UniPathway" id="UPA00379">
    <property type="reaction ID" value="UER00551"/>
</dbReference>
<dbReference type="Proteomes" id="UP000007104">
    <property type="component" value="Chromosome II"/>
</dbReference>
<dbReference type="GO" id="GO:0005737">
    <property type="term" value="C:cytoplasm"/>
    <property type="evidence" value="ECO:0007669"/>
    <property type="project" value="UniProtKB-SubCell"/>
</dbReference>
<dbReference type="GO" id="GO:0050480">
    <property type="term" value="F:imidazolonepropionase activity"/>
    <property type="evidence" value="ECO:0007669"/>
    <property type="project" value="UniProtKB-UniRule"/>
</dbReference>
<dbReference type="GO" id="GO:0005506">
    <property type="term" value="F:iron ion binding"/>
    <property type="evidence" value="ECO:0007669"/>
    <property type="project" value="UniProtKB-UniRule"/>
</dbReference>
<dbReference type="GO" id="GO:0008270">
    <property type="term" value="F:zinc ion binding"/>
    <property type="evidence" value="ECO:0007669"/>
    <property type="project" value="UniProtKB-UniRule"/>
</dbReference>
<dbReference type="GO" id="GO:0019556">
    <property type="term" value="P:L-histidine catabolic process to glutamate and formamide"/>
    <property type="evidence" value="ECO:0007669"/>
    <property type="project" value="UniProtKB-UniPathway"/>
</dbReference>
<dbReference type="GO" id="GO:0019557">
    <property type="term" value="P:L-histidine catabolic process to glutamate and formate"/>
    <property type="evidence" value="ECO:0007669"/>
    <property type="project" value="UniProtKB-UniPathway"/>
</dbReference>
<dbReference type="CDD" id="cd01296">
    <property type="entry name" value="Imidazolone-5PH"/>
    <property type="match status" value="1"/>
</dbReference>
<dbReference type="FunFam" id="3.20.20.140:FF:000007">
    <property type="entry name" value="Imidazolonepropionase"/>
    <property type="match status" value="1"/>
</dbReference>
<dbReference type="Gene3D" id="3.20.20.140">
    <property type="entry name" value="Metal-dependent hydrolases"/>
    <property type="match status" value="1"/>
</dbReference>
<dbReference type="Gene3D" id="2.30.40.10">
    <property type="entry name" value="Urease, subunit C, domain 1"/>
    <property type="match status" value="1"/>
</dbReference>
<dbReference type="HAMAP" id="MF_00372">
    <property type="entry name" value="HutI"/>
    <property type="match status" value="1"/>
</dbReference>
<dbReference type="InterPro" id="IPR006680">
    <property type="entry name" value="Amidohydro-rel"/>
</dbReference>
<dbReference type="InterPro" id="IPR005920">
    <property type="entry name" value="HutI"/>
</dbReference>
<dbReference type="InterPro" id="IPR011059">
    <property type="entry name" value="Metal-dep_hydrolase_composite"/>
</dbReference>
<dbReference type="InterPro" id="IPR032466">
    <property type="entry name" value="Metal_Hydrolase"/>
</dbReference>
<dbReference type="NCBIfam" id="TIGR01224">
    <property type="entry name" value="hutI"/>
    <property type="match status" value="1"/>
</dbReference>
<dbReference type="PANTHER" id="PTHR42752">
    <property type="entry name" value="IMIDAZOLONEPROPIONASE"/>
    <property type="match status" value="1"/>
</dbReference>
<dbReference type="PANTHER" id="PTHR42752:SF1">
    <property type="entry name" value="IMIDAZOLONEPROPIONASE-RELATED"/>
    <property type="match status" value="1"/>
</dbReference>
<dbReference type="Pfam" id="PF01979">
    <property type="entry name" value="Amidohydro_1"/>
    <property type="match status" value="1"/>
</dbReference>
<dbReference type="SUPFAM" id="SSF51338">
    <property type="entry name" value="Composite domain of metallo-dependent hydrolases"/>
    <property type="match status" value="1"/>
</dbReference>
<dbReference type="SUPFAM" id="SSF51556">
    <property type="entry name" value="Metallo-dependent hydrolases"/>
    <property type="match status" value="1"/>
</dbReference>
<name>HUTI_BRUSU</name>
<keyword id="KW-0963">Cytoplasm</keyword>
<keyword id="KW-0369">Histidine metabolism</keyword>
<keyword id="KW-0378">Hydrolase</keyword>
<keyword id="KW-0408">Iron</keyword>
<keyword id="KW-0479">Metal-binding</keyword>
<keyword id="KW-0862">Zinc</keyword>
<feature type="chain" id="PRO_0000160945" description="Imidazolonepropionase">
    <location>
        <begin position="1"/>
        <end position="405"/>
    </location>
</feature>
<feature type="binding site" evidence="1">
    <location>
        <position position="73"/>
    </location>
    <ligand>
        <name>Fe(3+)</name>
        <dbReference type="ChEBI" id="CHEBI:29034"/>
    </ligand>
</feature>
<feature type="binding site" evidence="1">
    <location>
        <position position="73"/>
    </location>
    <ligand>
        <name>Zn(2+)</name>
        <dbReference type="ChEBI" id="CHEBI:29105"/>
    </ligand>
</feature>
<feature type="binding site" evidence="1">
    <location>
        <position position="75"/>
    </location>
    <ligand>
        <name>Fe(3+)</name>
        <dbReference type="ChEBI" id="CHEBI:29034"/>
    </ligand>
</feature>
<feature type="binding site" evidence="1">
    <location>
        <position position="75"/>
    </location>
    <ligand>
        <name>Zn(2+)</name>
        <dbReference type="ChEBI" id="CHEBI:29105"/>
    </ligand>
</feature>
<feature type="binding site" evidence="1">
    <location>
        <position position="82"/>
    </location>
    <ligand>
        <name>4-imidazolone-5-propanoate</name>
        <dbReference type="ChEBI" id="CHEBI:77893"/>
    </ligand>
</feature>
<feature type="binding site" evidence="1">
    <location>
        <position position="145"/>
    </location>
    <ligand>
        <name>4-imidazolone-5-propanoate</name>
        <dbReference type="ChEBI" id="CHEBI:77893"/>
    </ligand>
</feature>
<feature type="binding site" evidence="1">
    <location>
        <position position="145"/>
    </location>
    <ligand>
        <name>N-formimidoyl-L-glutamate</name>
        <dbReference type="ChEBI" id="CHEBI:58928"/>
    </ligand>
</feature>
<feature type="binding site" evidence="1">
    <location>
        <position position="178"/>
    </location>
    <ligand>
        <name>4-imidazolone-5-propanoate</name>
        <dbReference type="ChEBI" id="CHEBI:77893"/>
    </ligand>
</feature>
<feature type="binding site" evidence="1">
    <location>
        <position position="243"/>
    </location>
    <ligand>
        <name>Fe(3+)</name>
        <dbReference type="ChEBI" id="CHEBI:29034"/>
    </ligand>
</feature>
<feature type="binding site" evidence="1">
    <location>
        <position position="243"/>
    </location>
    <ligand>
        <name>Zn(2+)</name>
        <dbReference type="ChEBI" id="CHEBI:29105"/>
    </ligand>
</feature>
<feature type="binding site" evidence="1">
    <location>
        <position position="246"/>
    </location>
    <ligand>
        <name>4-imidazolone-5-propanoate</name>
        <dbReference type="ChEBI" id="CHEBI:77893"/>
    </ligand>
</feature>
<feature type="binding site" evidence="1">
    <location>
        <position position="318"/>
    </location>
    <ligand>
        <name>Fe(3+)</name>
        <dbReference type="ChEBI" id="CHEBI:29034"/>
    </ligand>
</feature>
<feature type="binding site" evidence="1">
    <location>
        <position position="318"/>
    </location>
    <ligand>
        <name>Zn(2+)</name>
        <dbReference type="ChEBI" id="CHEBI:29105"/>
    </ligand>
</feature>
<feature type="binding site" evidence="1">
    <location>
        <position position="320"/>
    </location>
    <ligand>
        <name>N-formimidoyl-L-glutamate</name>
        <dbReference type="ChEBI" id="CHEBI:58928"/>
    </ligand>
</feature>
<feature type="binding site" evidence="1">
    <location>
        <position position="322"/>
    </location>
    <ligand>
        <name>N-formimidoyl-L-glutamate</name>
        <dbReference type="ChEBI" id="CHEBI:58928"/>
    </ligand>
</feature>
<feature type="binding site" evidence="1">
    <location>
        <position position="323"/>
    </location>
    <ligand>
        <name>4-imidazolone-5-propanoate</name>
        <dbReference type="ChEBI" id="CHEBI:77893"/>
    </ligand>
</feature>
<evidence type="ECO:0000255" key="1">
    <source>
        <dbReference type="HAMAP-Rule" id="MF_00372"/>
    </source>
</evidence>
<reference key="1">
    <citation type="journal article" date="2002" name="Proc. Natl. Acad. Sci. U.S.A.">
        <title>The Brucella suis genome reveals fundamental similarities between animal and plant pathogens and symbionts.</title>
        <authorList>
            <person name="Paulsen I.T."/>
            <person name="Seshadri R."/>
            <person name="Nelson K.E."/>
            <person name="Eisen J.A."/>
            <person name="Heidelberg J.F."/>
            <person name="Read T.D."/>
            <person name="Dodson R.J."/>
            <person name="Umayam L.A."/>
            <person name="Brinkac L.M."/>
            <person name="Beanan M.J."/>
            <person name="Daugherty S.C."/>
            <person name="DeBoy R.T."/>
            <person name="Durkin A.S."/>
            <person name="Kolonay J.F."/>
            <person name="Madupu R."/>
            <person name="Nelson W.C."/>
            <person name="Ayodeji B."/>
            <person name="Kraul M."/>
            <person name="Shetty J."/>
            <person name="Malek J.A."/>
            <person name="Van Aken S.E."/>
            <person name="Riedmuller S."/>
            <person name="Tettelin H."/>
            <person name="Gill S.R."/>
            <person name="White O."/>
            <person name="Salzberg S.L."/>
            <person name="Hoover D.L."/>
            <person name="Lindler L.E."/>
            <person name="Halling S.M."/>
            <person name="Boyle S.M."/>
            <person name="Fraser C.M."/>
        </authorList>
    </citation>
    <scope>NUCLEOTIDE SEQUENCE [LARGE SCALE GENOMIC DNA]</scope>
    <source>
        <strain>1330</strain>
    </source>
</reference>
<reference key="2">
    <citation type="journal article" date="2011" name="J. Bacteriol.">
        <title>Revised genome sequence of Brucella suis 1330.</title>
        <authorList>
            <person name="Tae H."/>
            <person name="Shallom S."/>
            <person name="Settlage R."/>
            <person name="Preston D."/>
            <person name="Adams L.G."/>
            <person name="Garner H.R."/>
        </authorList>
    </citation>
    <scope>NUCLEOTIDE SEQUENCE [LARGE SCALE GENOMIC DNA]</scope>
    <source>
        <strain>1330</strain>
    </source>
</reference>
<gene>
    <name evidence="1" type="primary">hutI</name>
    <name type="ordered locus">BRA0929</name>
    <name type="ordered locus">BS1330_II0921</name>
</gene>
<comment type="function">
    <text evidence="1">Catalyzes the hydrolytic cleavage of the carbon-nitrogen bond in imidazolone-5-propanoate to yield N-formimidoyl-L-glutamate. It is the third step in the universal histidine degradation pathway.</text>
</comment>
<comment type="catalytic activity">
    <reaction evidence="1">
        <text>4-imidazolone-5-propanoate + H2O = N-formimidoyl-L-glutamate</text>
        <dbReference type="Rhea" id="RHEA:23660"/>
        <dbReference type="ChEBI" id="CHEBI:15377"/>
        <dbReference type="ChEBI" id="CHEBI:58928"/>
        <dbReference type="ChEBI" id="CHEBI:77893"/>
        <dbReference type="EC" id="3.5.2.7"/>
    </reaction>
</comment>
<comment type="cofactor">
    <cofactor evidence="1">
        <name>Zn(2+)</name>
        <dbReference type="ChEBI" id="CHEBI:29105"/>
    </cofactor>
    <cofactor evidence="1">
        <name>Fe(3+)</name>
        <dbReference type="ChEBI" id="CHEBI:29034"/>
    </cofactor>
    <text evidence="1">Binds 1 zinc or iron ion per subunit.</text>
</comment>
<comment type="pathway">
    <text evidence="1">Amino-acid degradation; L-histidine degradation into L-glutamate; N-formimidoyl-L-glutamate from L-histidine: step 3/3.</text>
</comment>
<comment type="subcellular location">
    <subcellularLocation>
        <location evidence="1">Cytoplasm</location>
    </subcellularLocation>
</comment>
<comment type="similarity">
    <text evidence="1">Belongs to the metallo-dependent hydrolases superfamily. HutI family.</text>
</comment>